<organism>
    <name type="scientific">Prochlorococcus marinus (strain MIT 9215)</name>
    <dbReference type="NCBI Taxonomy" id="93060"/>
    <lineage>
        <taxon>Bacteria</taxon>
        <taxon>Bacillati</taxon>
        <taxon>Cyanobacteriota</taxon>
        <taxon>Cyanophyceae</taxon>
        <taxon>Synechococcales</taxon>
        <taxon>Prochlorococcaceae</taxon>
        <taxon>Prochlorococcus</taxon>
    </lineage>
</organism>
<evidence type="ECO:0000255" key="1">
    <source>
        <dbReference type="HAMAP-Rule" id="MF_01320"/>
    </source>
</evidence>
<evidence type="ECO:0000256" key="2">
    <source>
        <dbReference type="SAM" id="MobiDB-lite"/>
    </source>
</evidence>
<evidence type="ECO:0000305" key="3"/>
<name>RL2_PROM2</name>
<dbReference type="EMBL" id="CP000825">
    <property type="protein sequence ID" value="ABV51440.1"/>
    <property type="molecule type" value="Genomic_DNA"/>
</dbReference>
<dbReference type="RefSeq" id="WP_012008446.1">
    <property type="nucleotide sequence ID" value="NC_009840.1"/>
</dbReference>
<dbReference type="SMR" id="A8G759"/>
<dbReference type="STRING" id="93060.P9215_18271"/>
<dbReference type="KEGG" id="pmh:P9215_18271"/>
<dbReference type="eggNOG" id="COG0090">
    <property type="taxonomic scope" value="Bacteria"/>
</dbReference>
<dbReference type="HOGENOM" id="CLU_036235_2_1_3"/>
<dbReference type="OrthoDB" id="9778722at2"/>
<dbReference type="Proteomes" id="UP000002014">
    <property type="component" value="Chromosome"/>
</dbReference>
<dbReference type="GO" id="GO:0015934">
    <property type="term" value="C:large ribosomal subunit"/>
    <property type="evidence" value="ECO:0007669"/>
    <property type="project" value="InterPro"/>
</dbReference>
<dbReference type="GO" id="GO:0019843">
    <property type="term" value="F:rRNA binding"/>
    <property type="evidence" value="ECO:0007669"/>
    <property type="project" value="UniProtKB-UniRule"/>
</dbReference>
<dbReference type="GO" id="GO:0003735">
    <property type="term" value="F:structural constituent of ribosome"/>
    <property type="evidence" value="ECO:0007669"/>
    <property type="project" value="InterPro"/>
</dbReference>
<dbReference type="GO" id="GO:0016740">
    <property type="term" value="F:transferase activity"/>
    <property type="evidence" value="ECO:0007669"/>
    <property type="project" value="InterPro"/>
</dbReference>
<dbReference type="GO" id="GO:0006412">
    <property type="term" value="P:translation"/>
    <property type="evidence" value="ECO:0007669"/>
    <property type="project" value="UniProtKB-UniRule"/>
</dbReference>
<dbReference type="FunFam" id="2.30.30.30:FF:000001">
    <property type="entry name" value="50S ribosomal protein L2"/>
    <property type="match status" value="1"/>
</dbReference>
<dbReference type="FunFam" id="2.40.50.140:FF:000003">
    <property type="entry name" value="50S ribosomal protein L2"/>
    <property type="match status" value="1"/>
</dbReference>
<dbReference type="FunFam" id="4.10.950.10:FF:000001">
    <property type="entry name" value="50S ribosomal protein L2"/>
    <property type="match status" value="1"/>
</dbReference>
<dbReference type="Gene3D" id="2.30.30.30">
    <property type="match status" value="1"/>
</dbReference>
<dbReference type="Gene3D" id="2.40.50.140">
    <property type="entry name" value="Nucleic acid-binding proteins"/>
    <property type="match status" value="1"/>
</dbReference>
<dbReference type="Gene3D" id="4.10.950.10">
    <property type="entry name" value="Ribosomal protein L2, domain 3"/>
    <property type="match status" value="1"/>
</dbReference>
<dbReference type="HAMAP" id="MF_01320_B">
    <property type="entry name" value="Ribosomal_uL2_B"/>
    <property type="match status" value="1"/>
</dbReference>
<dbReference type="InterPro" id="IPR012340">
    <property type="entry name" value="NA-bd_OB-fold"/>
</dbReference>
<dbReference type="InterPro" id="IPR014722">
    <property type="entry name" value="Rib_uL2_dom2"/>
</dbReference>
<dbReference type="InterPro" id="IPR002171">
    <property type="entry name" value="Ribosomal_uL2"/>
</dbReference>
<dbReference type="InterPro" id="IPR005880">
    <property type="entry name" value="Ribosomal_uL2_bac/org-type"/>
</dbReference>
<dbReference type="InterPro" id="IPR022669">
    <property type="entry name" value="Ribosomal_uL2_C"/>
</dbReference>
<dbReference type="InterPro" id="IPR022671">
    <property type="entry name" value="Ribosomal_uL2_CS"/>
</dbReference>
<dbReference type="InterPro" id="IPR014726">
    <property type="entry name" value="Ribosomal_uL2_dom3"/>
</dbReference>
<dbReference type="InterPro" id="IPR022666">
    <property type="entry name" value="Ribosomal_uL2_RNA-bd_dom"/>
</dbReference>
<dbReference type="InterPro" id="IPR008991">
    <property type="entry name" value="Translation_prot_SH3-like_sf"/>
</dbReference>
<dbReference type="NCBIfam" id="TIGR01171">
    <property type="entry name" value="rplB_bact"/>
    <property type="match status" value="1"/>
</dbReference>
<dbReference type="PANTHER" id="PTHR13691:SF5">
    <property type="entry name" value="LARGE RIBOSOMAL SUBUNIT PROTEIN UL2M"/>
    <property type="match status" value="1"/>
</dbReference>
<dbReference type="PANTHER" id="PTHR13691">
    <property type="entry name" value="RIBOSOMAL PROTEIN L2"/>
    <property type="match status" value="1"/>
</dbReference>
<dbReference type="Pfam" id="PF00181">
    <property type="entry name" value="Ribosomal_L2"/>
    <property type="match status" value="1"/>
</dbReference>
<dbReference type="Pfam" id="PF03947">
    <property type="entry name" value="Ribosomal_L2_C"/>
    <property type="match status" value="1"/>
</dbReference>
<dbReference type="PIRSF" id="PIRSF002158">
    <property type="entry name" value="Ribosomal_L2"/>
    <property type="match status" value="1"/>
</dbReference>
<dbReference type="SMART" id="SM01383">
    <property type="entry name" value="Ribosomal_L2"/>
    <property type="match status" value="1"/>
</dbReference>
<dbReference type="SMART" id="SM01382">
    <property type="entry name" value="Ribosomal_L2_C"/>
    <property type="match status" value="1"/>
</dbReference>
<dbReference type="SUPFAM" id="SSF50249">
    <property type="entry name" value="Nucleic acid-binding proteins"/>
    <property type="match status" value="1"/>
</dbReference>
<dbReference type="SUPFAM" id="SSF50104">
    <property type="entry name" value="Translation proteins SH3-like domain"/>
    <property type="match status" value="1"/>
</dbReference>
<dbReference type="PROSITE" id="PS00467">
    <property type="entry name" value="RIBOSOMAL_L2"/>
    <property type="match status" value="1"/>
</dbReference>
<reference key="1">
    <citation type="journal article" date="2007" name="PLoS Genet.">
        <title>Patterns and implications of gene gain and loss in the evolution of Prochlorococcus.</title>
        <authorList>
            <person name="Kettler G.C."/>
            <person name="Martiny A.C."/>
            <person name="Huang K."/>
            <person name="Zucker J."/>
            <person name="Coleman M.L."/>
            <person name="Rodrigue S."/>
            <person name="Chen F."/>
            <person name="Lapidus A."/>
            <person name="Ferriera S."/>
            <person name="Johnson J."/>
            <person name="Steglich C."/>
            <person name="Church G.M."/>
            <person name="Richardson P."/>
            <person name="Chisholm S.W."/>
        </authorList>
    </citation>
    <scope>NUCLEOTIDE SEQUENCE [LARGE SCALE GENOMIC DNA]</scope>
    <source>
        <strain>MIT 9215</strain>
    </source>
</reference>
<comment type="function">
    <text evidence="1">One of the primary rRNA binding proteins. Required for association of the 30S and 50S subunits to form the 70S ribosome, for tRNA binding and peptide bond formation. It has been suggested to have peptidyltransferase activity; this is somewhat controversial. Makes several contacts with the 16S rRNA in the 70S ribosome.</text>
</comment>
<comment type="subunit">
    <text evidence="1">Part of the 50S ribosomal subunit. Forms a bridge to the 30S subunit in the 70S ribosome.</text>
</comment>
<comment type="similarity">
    <text evidence="1">Belongs to the universal ribosomal protein uL2 family.</text>
</comment>
<gene>
    <name evidence="1" type="primary">rplB</name>
    <name evidence="1" type="synonym">rpl2</name>
    <name type="ordered locus">P9215_18271</name>
</gene>
<keyword id="KW-0687">Ribonucleoprotein</keyword>
<keyword id="KW-0689">Ribosomal protein</keyword>
<keyword id="KW-0694">RNA-binding</keyword>
<keyword id="KW-0699">rRNA-binding</keyword>
<accession>A8G759</accession>
<sequence>MAIRKFKPYTPGTRQRVVTDFSEITSAKPERSLIVPKHRVKGRNNRGVITCRHRGGGHKRQYRLVDFRRDKRNINAKVAAIHYDPHRNARLALLFYEDGEKRYIIAPAGVKVGQNVISGESVPIEDGNAMPLSVMPLGSSVHCVELYAGRGAQMVRSAGASAQVMAKEGDYVALKLPSTEVRLVRKECYATLGEVGNSEIRNTSLGKAGRRRWLGRRPQVRGSVMNPCDHPHGGGEGKAPIGRAGPVTPWGKPALGLKTRKKNKPSNKLVVRRRRRISKRSRGGRDS</sequence>
<proteinExistence type="inferred from homology"/>
<feature type="chain" id="PRO_1000067543" description="Large ribosomal subunit protein uL2">
    <location>
        <begin position="1"/>
        <end position="287"/>
    </location>
</feature>
<feature type="region of interest" description="Disordered" evidence="2">
    <location>
        <begin position="221"/>
        <end position="287"/>
    </location>
</feature>
<feature type="compositionally biased region" description="Basic residues" evidence="2">
    <location>
        <begin position="258"/>
        <end position="287"/>
    </location>
</feature>
<protein>
    <recommendedName>
        <fullName evidence="1">Large ribosomal subunit protein uL2</fullName>
    </recommendedName>
    <alternativeName>
        <fullName evidence="3">50S ribosomal protein L2</fullName>
    </alternativeName>
</protein>